<dbReference type="EMBL" id="CR858497">
    <property type="protein sequence ID" value="CAH90725.1"/>
    <property type="molecule type" value="mRNA"/>
</dbReference>
<dbReference type="RefSeq" id="NP_001125404.1">
    <property type="nucleotide sequence ID" value="NM_001131932.1"/>
</dbReference>
<dbReference type="SMR" id="Q5RBY5"/>
<dbReference type="FunCoup" id="Q5RBY5">
    <property type="interactions" value="2046"/>
</dbReference>
<dbReference type="STRING" id="9601.ENSPPYP00000001548"/>
<dbReference type="GeneID" id="100172309"/>
<dbReference type="KEGG" id="pon:100172309"/>
<dbReference type="CTD" id="55706"/>
<dbReference type="eggNOG" id="KOG4358">
    <property type="taxonomic scope" value="Eukaryota"/>
</dbReference>
<dbReference type="InParanoid" id="Q5RBY5"/>
<dbReference type="OrthoDB" id="67850at2759"/>
<dbReference type="Proteomes" id="UP000001595">
    <property type="component" value="Unplaced"/>
</dbReference>
<dbReference type="GO" id="GO:0031965">
    <property type="term" value="C:nuclear membrane"/>
    <property type="evidence" value="ECO:0007669"/>
    <property type="project" value="UniProtKB-SubCell"/>
</dbReference>
<dbReference type="GO" id="GO:0070762">
    <property type="term" value="C:nuclear pore transmembrane ring"/>
    <property type="evidence" value="ECO:0007669"/>
    <property type="project" value="TreeGrafter"/>
</dbReference>
<dbReference type="GO" id="GO:0030674">
    <property type="term" value="F:protein-macromolecule adaptor activity"/>
    <property type="evidence" value="ECO:0007669"/>
    <property type="project" value="TreeGrafter"/>
</dbReference>
<dbReference type="GO" id="GO:0051028">
    <property type="term" value="P:mRNA transport"/>
    <property type="evidence" value="ECO:0007669"/>
    <property type="project" value="UniProtKB-KW"/>
</dbReference>
<dbReference type="GO" id="GO:0006999">
    <property type="term" value="P:nuclear pore organization"/>
    <property type="evidence" value="ECO:0007669"/>
    <property type="project" value="TreeGrafter"/>
</dbReference>
<dbReference type="GO" id="GO:0015031">
    <property type="term" value="P:protein transport"/>
    <property type="evidence" value="ECO:0007669"/>
    <property type="project" value="UniProtKB-KW"/>
</dbReference>
<dbReference type="InterPro" id="IPR019049">
    <property type="entry name" value="Nucleoporin_prot_Ndc1/Nup"/>
</dbReference>
<dbReference type="PANTHER" id="PTHR13269">
    <property type="entry name" value="NUCLEOPORIN NDC1"/>
    <property type="match status" value="1"/>
</dbReference>
<dbReference type="PANTHER" id="PTHR13269:SF6">
    <property type="entry name" value="NUCLEOPORIN NDC1"/>
    <property type="match status" value="1"/>
</dbReference>
<dbReference type="Pfam" id="PF09531">
    <property type="entry name" value="Ndc1_Nup"/>
    <property type="match status" value="1"/>
</dbReference>
<accession>Q5RBY5</accession>
<evidence type="ECO:0000250" key="1"/>
<evidence type="ECO:0000250" key="2">
    <source>
        <dbReference type="UniProtKB" id="Q6AXN4"/>
    </source>
</evidence>
<evidence type="ECO:0000250" key="3">
    <source>
        <dbReference type="UniProtKB" id="Q9BTX1"/>
    </source>
</evidence>
<evidence type="ECO:0000255" key="4"/>
<evidence type="ECO:0000256" key="5">
    <source>
        <dbReference type="SAM" id="MobiDB-lite"/>
    </source>
</evidence>
<evidence type="ECO:0000305" key="6"/>
<feature type="chain" id="PRO_0000235242" description="Nucleoporin NDC1">
    <location>
        <begin position="1"/>
        <end position="674"/>
    </location>
</feature>
<feature type="topological domain" description="Cytoplasmic" evidence="4">
    <location>
        <begin position="1"/>
        <end position="24"/>
    </location>
</feature>
<feature type="transmembrane region" description="Helical; Name=1" evidence="4">
    <location>
        <begin position="25"/>
        <end position="45"/>
    </location>
</feature>
<feature type="topological domain" description="Perinuclear space" evidence="4">
    <location>
        <begin position="46"/>
        <end position="68"/>
    </location>
</feature>
<feature type="transmembrane region" description="Helical; Name=2" evidence="4">
    <location>
        <begin position="69"/>
        <end position="89"/>
    </location>
</feature>
<feature type="topological domain" description="Cytoplasmic" evidence="4">
    <location>
        <begin position="90"/>
        <end position="114"/>
    </location>
</feature>
<feature type="transmembrane region" description="Helical; Name=3" evidence="4">
    <location>
        <begin position="115"/>
        <end position="135"/>
    </location>
</feature>
<feature type="topological domain" description="Perinuclear space" evidence="4">
    <location>
        <begin position="136"/>
        <end position="165"/>
    </location>
</feature>
<feature type="transmembrane region" description="Helical; Name=4" evidence="4">
    <location>
        <begin position="166"/>
        <end position="186"/>
    </location>
</feature>
<feature type="topological domain" description="Cytoplasmic" evidence="4">
    <location>
        <begin position="187"/>
        <end position="225"/>
    </location>
</feature>
<feature type="transmembrane region" description="Helical; Name=5" evidence="4">
    <location>
        <begin position="226"/>
        <end position="246"/>
    </location>
</feature>
<feature type="topological domain" description="Perinuclear space" evidence="4">
    <location>
        <begin position="247"/>
        <end position="272"/>
    </location>
</feature>
<feature type="transmembrane region" description="Helical; Name=6" evidence="4">
    <location>
        <begin position="273"/>
        <end position="293"/>
    </location>
</feature>
<feature type="topological domain" description="Cytoplasmic" evidence="4">
    <location>
        <begin position="294"/>
        <end position="674"/>
    </location>
</feature>
<feature type="region of interest" description="Disordered" evidence="5">
    <location>
        <begin position="394"/>
        <end position="425"/>
    </location>
</feature>
<feature type="compositionally biased region" description="Polar residues" evidence="5">
    <location>
        <begin position="407"/>
        <end position="421"/>
    </location>
</feature>
<feature type="modified residue" description="Phosphoserine" evidence="3">
    <location>
        <position position="406"/>
    </location>
</feature>
<feature type="modified residue" description="Phosphothreonine" evidence="3">
    <location>
        <position position="414"/>
    </location>
</feature>
<feature type="modified residue" description="Phosphoserine" evidence="3">
    <location>
        <position position="439"/>
    </location>
</feature>
<feature type="modified residue" description="Phosphothreonine" evidence="3">
    <location>
        <position position="440"/>
    </location>
</feature>
<feature type="modified residue" description="Phosphoserine" evidence="3">
    <location>
        <position position="445"/>
    </location>
</feature>
<feature type="modified residue" description="Phosphothreonine" evidence="3">
    <location>
        <position position="449"/>
    </location>
</feature>
<feature type="modified residue" description="Phosphoserine" evidence="3">
    <location>
        <position position="471"/>
    </location>
</feature>
<feature type="modified residue" description="Phosphoserine" evidence="3">
    <location>
        <position position="474"/>
    </location>
</feature>
<reference key="1">
    <citation type="submission" date="2004-11" db="EMBL/GenBank/DDBJ databases">
        <authorList>
            <consortium name="The German cDNA consortium"/>
        </authorList>
    </citation>
    <scope>NUCLEOTIDE SEQUENCE [LARGE SCALE MRNA]</scope>
    <source>
        <tissue>Kidney</tissue>
    </source>
</reference>
<name>NDC1_PONAB</name>
<organism>
    <name type="scientific">Pongo abelii</name>
    <name type="common">Sumatran orangutan</name>
    <name type="synonym">Pongo pygmaeus abelii</name>
    <dbReference type="NCBI Taxonomy" id="9601"/>
    <lineage>
        <taxon>Eukaryota</taxon>
        <taxon>Metazoa</taxon>
        <taxon>Chordata</taxon>
        <taxon>Craniata</taxon>
        <taxon>Vertebrata</taxon>
        <taxon>Euteleostomi</taxon>
        <taxon>Mammalia</taxon>
        <taxon>Eutheria</taxon>
        <taxon>Euarchontoglires</taxon>
        <taxon>Primates</taxon>
        <taxon>Haplorrhini</taxon>
        <taxon>Catarrhini</taxon>
        <taxon>Hominidae</taxon>
        <taxon>Pongo</taxon>
    </lineage>
</organism>
<comment type="function">
    <text evidence="1">Component of the nuclear pore complex (NPC), which plays a key role in de novo assembly and insertion of NPC in the nuclear envelope. Required for NPC and nuclear envelope assembly, possibly by forming a link between the nuclear envelope membrane and soluble nucleoporins, thereby anchoring the NPC in the membrane (By similarity).</text>
</comment>
<comment type="subunit">
    <text evidence="2">Interacts with the NUP35/NUP53.</text>
</comment>
<comment type="subcellular location">
    <subcellularLocation>
        <location evidence="1">Nucleus</location>
        <location evidence="1">Nuclear pore complex</location>
    </subcellularLocation>
    <subcellularLocation>
        <location evidence="1">Nucleus membrane</location>
        <topology evidence="1">Multi-pass membrane protein</topology>
    </subcellularLocation>
    <text evidence="1">Central core structure of the nuclear pore complex.</text>
</comment>
<comment type="PTM">
    <text evidence="1">Phosphorylated.</text>
</comment>
<comment type="similarity">
    <text evidence="6">Belongs to the NDC1 family.</text>
</comment>
<protein>
    <recommendedName>
        <fullName>Nucleoporin NDC1</fullName>
    </recommendedName>
    <alternativeName>
        <fullName>Transmembrane protein 48</fullName>
    </alternativeName>
</protein>
<sequence length="674" mass="76078">MATAVSGPCAGRSRDILWRVLGWRIVASIIWSVLLLPICTTVFIIFSRIDLFHPIQWLSDSFSDLYSSYVIFYLLLLSVVIIIISIFNVEFYAVVPSIPCSRLALIGKIIHPQQLMHSFIHAAMGMVMAWCAAVITQGQYSFLVVPCTGANSFGSPAAQTCLNEYHLFFLLAGALMGYSYSLLYFVNNMNYLPFPIIQQYKFLRFRRSLLLLVKHSCVESLFLVRNFCILYYFLGYIPKAWISTAMNLHIDEQVHRPLDTVSGLLNLSLLYHVWLCGAFLLTTWYVSWILFKIYATEAHVFPVQPPFAEGSDECLPKVLNSNPPPIIKYLALQDLMLFSQYSPSRRQEVFSLSQPGGHPHNWTAISRECLNLLNGMTQKLVLYQEAAATNGRVSSSYPVEPKKLNSPEETTFQTPKSSQMPRPSVPPLVKTSLFSSKLSTPEVVSPFGTPFGSSVMNRMAGIFDVNTCFGSPQSPQLIRRGPRLWTSASDQQMTEFSNPSPSTSISAEGKTMRQPSVIYSWIQNKREQIKNFLSKRVLIMYFFSKHPEASIQAVFSDAQMHIWALEGLSHLVAASFTEDRFGVVQTTLPAILNTLLTLQEAVDKYFKLPHASSKPPRISGSLVDTSYKTLRFAFRASLKTAIYRITTTFGEHLNAVQASAEHQKRLQQFLEFKE</sequence>
<gene>
    <name type="primary">NDC1</name>
    <name type="synonym">TMEM48</name>
</gene>
<proteinExistence type="evidence at transcript level"/>
<keyword id="KW-0472">Membrane</keyword>
<keyword id="KW-0509">mRNA transport</keyword>
<keyword id="KW-0906">Nuclear pore complex</keyword>
<keyword id="KW-0539">Nucleus</keyword>
<keyword id="KW-0597">Phosphoprotein</keyword>
<keyword id="KW-0653">Protein transport</keyword>
<keyword id="KW-1185">Reference proteome</keyword>
<keyword id="KW-0811">Translocation</keyword>
<keyword id="KW-0812">Transmembrane</keyword>
<keyword id="KW-1133">Transmembrane helix</keyword>
<keyword id="KW-0813">Transport</keyword>